<proteinExistence type="inferred from homology"/>
<name>RL34_FRATH</name>
<accession>Q2A5N1</accession>
<feature type="chain" id="PRO_1000013340" description="Large ribosomal subunit protein bL34">
    <location>
        <begin position="1"/>
        <end position="44"/>
    </location>
</feature>
<dbReference type="EMBL" id="AM233362">
    <property type="protein sequence ID" value="CAJ78616.1"/>
    <property type="molecule type" value="Genomic_DNA"/>
</dbReference>
<dbReference type="RefSeq" id="WP_003014180.1">
    <property type="nucleotide sequence ID" value="NZ_CP009694.1"/>
</dbReference>
<dbReference type="SMR" id="Q2A5N1"/>
<dbReference type="GeneID" id="93255665"/>
<dbReference type="KEGG" id="ftl:FTL_0175"/>
<dbReference type="Proteomes" id="UP000001944">
    <property type="component" value="Chromosome"/>
</dbReference>
<dbReference type="GO" id="GO:1990904">
    <property type="term" value="C:ribonucleoprotein complex"/>
    <property type="evidence" value="ECO:0007669"/>
    <property type="project" value="UniProtKB-KW"/>
</dbReference>
<dbReference type="GO" id="GO:0005840">
    <property type="term" value="C:ribosome"/>
    <property type="evidence" value="ECO:0007669"/>
    <property type="project" value="UniProtKB-KW"/>
</dbReference>
<dbReference type="GO" id="GO:0003735">
    <property type="term" value="F:structural constituent of ribosome"/>
    <property type="evidence" value="ECO:0007669"/>
    <property type="project" value="InterPro"/>
</dbReference>
<dbReference type="GO" id="GO:0006412">
    <property type="term" value="P:translation"/>
    <property type="evidence" value="ECO:0007669"/>
    <property type="project" value="UniProtKB-UniRule"/>
</dbReference>
<dbReference type="FunFam" id="1.10.287.3980:FF:000001">
    <property type="entry name" value="Mitochondrial ribosomal protein L34"/>
    <property type="match status" value="1"/>
</dbReference>
<dbReference type="Gene3D" id="1.10.287.3980">
    <property type="match status" value="1"/>
</dbReference>
<dbReference type="HAMAP" id="MF_00391">
    <property type="entry name" value="Ribosomal_bL34"/>
    <property type="match status" value="1"/>
</dbReference>
<dbReference type="InterPro" id="IPR000271">
    <property type="entry name" value="Ribosomal_bL34"/>
</dbReference>
<dbReference type="InterPro" id="IPR020939">
    <property type="entry name" value="Ribosomal_bL34_CS"/>
</dbReference>
<dbReference type="NCBIfam" id="TIGR01030">
    <property type="entry name" value="rpmH_bact"/>
    <property type="match status" value="1"/>
</dbReference>
<dbReference type="PANTHER" id="PTHR14503:SF4">
    <property type="entry name" value="LARGE RIBOSOMAL SUBUNIT PROTEIN BL34M"/>
    <property type="match status" value="1"/>
</dbReference>
<dbReference type="PANTHER" id="PTHR14503">
    <property type="entry name" value="MITOCHONDRIAL RIBOSOMAL PROTEIN 34 FAMILY MEMBER"/>
    <property type="match status" value="1"/>
</dbReference>
<dbReference type="Pfam" id="PF00468">
    <property type="entry name" value="Ribosomal_L34"/>
    <property type="match status" value="1"/>
</dbReference>
<dbReference type="PROSITE" id="PS00784">
    <property type="entry name" value="RIBOSOMAL_L34"/>
    <property type="match status" value="1"/>
</dbReference>
<comment type="similarity">
    <text evidence="1">Belongs to the bacterial ribosomal protein bL34 family.</text>
</comment>
<organism>
    <name type="scientific">Francisella tularensis subsp. holarctica (strain LVS)</name>
    <dbReference type="NCBI Taxonomy" id="376619"/>
    <lineage>
        <taxon>Bacteria</taxon>
        <taxon>Pseudomonadati</taxon>
        <taxon>Pseudomonadota</taxon>
        <taxon>Gammaproteobacteria</taxon>
        <taxon>Thiotrichales</taxon>
        <taxon>Francisellaceae</taxon>
        <taxon>Francisella</taxon>
    </lineage>
</organism>
<reference key="1">
    <citation type="submission" date="2006-03" db="EMBL/GenBank/DDBJ databases">
        <title>Complete genome sequence of Francisella tularensis LVS (Live Vaccine Strain).</title>
        <authorList>
            <person name="Chain P."/>
            <person name="Larimer F."/>
            <person name="Land M."/>
            <person name="Stilwagen S."/>
            <person name="Larsson P."/>
            <person name="Bearden S."/>
            <person name="Chu M."/>
            <person name="Oyston P."/>
            <person name="Forsman M."/>
            <person name="Andersson S."/>
            <person name="Lindler L."/>
            <person name="Titball R."/>
            <person name="Garcia E."/>
        </authorList>
    </citation>
    <scope>NUCLEOTIDE SEQUENCE [LARGE SCALE GENOMIC DNA]</scope>
    <source>
        <strain>LVS</strain>
    </source>
</reference>
<gene>
    <name evidence="1" type="primary">rpmH</name>
    <name type="ordered locus">FTL_0175</name>
</gene>
<evidence type="ECO:0000255" key="1">
    <source>
        <dbReference type="HAMAP-Rule" id="MF_00391"/>
    </source>
</evidence>
<evidence type="ECO:0000305" key="2"/>
<sequence length="44" mass="5180">MKRTFQPSNLKRKRTHGFRARMKTLSGRKVIRNRRAKGRAKLAA</sequence>
<protein>
    <recommendedName>
        <fullName evidence="1">Large ribosomal subunit protein bL34</fullName>
    </recommendedName>
    <alternativeName>
        <fullName evidence="2">50S ribosomal protein L34</fullName>
    </alternativeName>
</protein>
<keyword id="KW-1185">Reference proteome</keyword>
<keyword id="KW-0687">Ribonucleoprotein</keyword>
<keyword id="KW-0689">Ribosomal protein</keyword>